<dbReference type="EMBL" id="AB271918">
    <property type="protein sequence ID" value="BAF64720.1"/>
    <property type="molecule type" value="mRNA"/>
</dbReference>
<dbReference type="EMBL" id="AK005996">
    <property type="protein sequence ID" value="BAB24357.1"/>
    <property type="molecule type" value="mRNA"/>
</dbReference>
<dbReference type="EMBL" id="AK014644">
    <property type="protein sequence ID" value="BAB29486.1"/>
    <property type="status" value="ALT_FRAME"/>
    <property type="molecule type" value="mRNA"/>
</dbReference>
<dbReference type="EMBL" id="AK015543">
    <property type="protein sequence ID" value="BAB29889.1"/>
    <property type="molecule type" value="mRNA"/>
</dbReference>
<dbReference type="EMBL" id="BC003961">
    <property type="protein sequence ID" value="AAH03961.1"/>
    <property type="molecule type" value="mRNA"/>
</dbReference>
<dbReference type="EMBL" id="BC051035">
    <property type="protein sequence ID" value="AAH51035.1"/>
    <property type="molecule type" value="mRNA"/>
</dbReference>
<dbReference type="CCDS" id="CCDS27389.1">
    <molecule id="Q9CRA5-1"/>
</dbReference>
<dbReference type="RefSeq" id="NP_079949.1">
    <molecule id="Q9CRA5-1"/>
    <property type="nucleotide sequence ID" value="NM_025673.2"/>
</dbReference>
<dbReference type="SMR" id="Q9CRA5"/>
<dbReference type="BioGRID" id="211608">
    <property type="interactions" value="6"/>
</dbReference>
<dbReference type="FunCoup" id="Q9CRA5">
    <property type="interactions" value="3585"/>
</dbReference>
<dbReference type="IntAct" id="Q9CRA5">
    <property type="interactions" value="1"/>
</dbReference>
<dbReference type="STRING" id="10090.ENSMUSP00000057375"/>
<dbReference type="iPTMnet" id="Q9CRA5"/>
<dbReference type="PhosphoSitePlus" id="Q9CRA5"/>
<dbReference type="SwissPalm" id="Q9CRA5"/>
<dbReference type="PaxDb" id="10090-ENSMUSP00000057375"/>
<dbReference type="PeptideAtlas" id="Q9CRA5"/>
<dbReference type="ProteomicsDB" id="271030">
    <molecule id="Q9CRA5-1"/>
</dbReference>
<dbReference type="ProteomicsDB" id="271031">
    <molecule id="Q9CRA5-2"/>
</dbReference>
<dbReference type="Pumba" id="Q9CRA5"/>
<dbReference type="Antibodypedia" id="22696">
    <property type="antibodies" value="289 antibodies from 36 providers"/>
</dbReference>
<dbReference type="DNASU" id="66629"/>
<dbReference type="Ensembl" id="ENSMUST00000059680.7">
    <molecule id="Q9CRA5-1"/>
    <property type="protein sequence ID" value="ENSMUSP00000057375.6"/>
    <property type="gene ID" value="ENSMUSG00000022200.9"/>
</dbReference>
<dbReference type="Ensembl" id="ENSMUST00000226517.2">
    <molecule id="Q9CRA5-2"/>
    <property type="protein sequence ID" value="ENSMUSP00000153929.2"/>
    <property type="gene ID" value="ENSMUSG00000022200.9"/>
</dbReference>
<dbReference type="GeneID" id="66629"/>
<dbReference type="KEGG" id="mmu:66629"/>
<dbReference type="UCSC" id="uc007vhn.1">
    <molecule id="Q9CRA5-1"/>
    <property type="organism name" value="mouse"/>
</dbReference>
<dbReference type="AGR" id="MGI:1913879"/>
<dbReference type="CTD" id="64083"/>
<dbReference type="MGI" id="MGI:1913879">
    <property type="gene designation" value="Golph3"/>
</dbReference>
<dbReference type="VEuPathDB" id="HostDB:ENSMUSG00000022200"/>
<dbReference type="eggNOG" id="KOG3983">
    <property type="taxonomic scope" value="Eukaryota"/>
</dbReference>
<dbReference type="GeneTree" id="ENSGT00390000007153"/>
<dbReference type="HOGENOM" id="CLU_036311_0_0_1"/>
<dbReference type="InParanoid" id="Q9CRA5"/>
<dbReference type="OMA" id="GETWNLL"/>
<dbReference type="OrthoDB" id="2189106at2759"/>
<dbReference type="PhylomeDB" id="Q9CRA5"/>
<dbReference type="TreeFam" id="TF314360"/>
<dbReference type="BioGRID-ORCS" id="66629">
    <property type="hits" value="5 hits in 80 CRISPR screens"/>
</dbReference>
<dbReference type="ChiTaRS" id="Golph3">
    <property type="organism name" value="mouse"/>
</dbReference>
<dbReference type="PRO" id="PR:Q9CRA5"/>
<dbReference type="Proteomes" id="UP000000589">
    <property type="component" value="Chromosome 15"/>
</dbReference>
<dbReference type="RNAct" id="Q9CRA5">
    <property type="molecule type" value="protein"/>
</dbReference>
<dbReference type="Bgee" id="ENSMUSG00000022200">
    <property type="expression patterns" value="Expressed in parotid gland and 252 other cell types or tissues"/>
</dbReference>
<dbReference type="ExpressionAtlas" id="Q9CRA5">
    <property type="expression patterns" value="baseline and differential"/>
</dbReference>
<dbReference type="GO" id="GO:0005829">
    <property type="term" value="C:cytosol"/>
    <property type="evidence" value="ECO:0000250"/>
    <property type="project" value="UniProtKB"/>
</dbReference>
<dbReference type="GO" id="GO:0005768">
    <property type="term" value="C:endosome"/>
    <property type="evidence" value="ECO:0007669"/>
    <property type="project" value="UniProtKB-SubCell"/>
</dbReference>
<dbReference type="GO" id="GO:0005794">
    <property type="term" value="C:Golgi apparatus"/>
    <property type="evidence" value="ECO:0000314"/>
    <property type="project" value="MGI"/>
</dbReference>
<dbReference type="GO" id="GO:0031985">
    <property type="term" value="C:Golgi cisterna"/>
    <property type="evidence" value="ECO:0000250"/>
    <property type="project" value="UniProtKB"/>
</dbReference>
<dbReference type="GO" id="GO:0032580">
    <property type="term" value="C:Golgi cisterna membrane"/>
    <property type="evidence" value="ECO:0007669"/>
    <property type="project" value="UniProtKB-SubCell"/>
</dbReference>
<dbReference type="GO" id="GO:0000139">
    <property type="term" value="C:Golgi membrane"/>
    <property type="evidence" value="ECO:0007669"/>
    <property type="project" value="GOC"/>
</dbReference>
<dbReference type="GO" id="GO:0005758">
    <property type="term" value="C:mitochondrial intermembrane space"/>
    <property type="evidence" value="ECO:0007669"/>
    <property type="project" value="UniProtKB-SubCell"/>
</dbReference>
<dbReference type="GO" id="GO:0005739">
    <property type="term" value="C:mitochondrion"/>
    <property type="evidence" value="ECO:0000250"/>
    <property type="project" value="UniProtKB"/>
</dbReference>
<dbReference type="GO" id="GO:0005886">
    <property type="term" value="C:plasma membrane"/>
    <property type="evidence" value="ECO:0007669"/>
    <property type="project" value="UniProtKB-SubCell"/>
</dbReference>
<dbReference type="GO" id="GO:0005802">
    <property type="term" value="C:trans-Golgi network"/>
    <property type="evidence" value="ECO:0000250"/>
    <property type="project" value="UniProtKB"/>
</dbReference>
<dbReference type="GO" id="GO:0140312">
    <property type="term" value="F:cargo adaptor activity"/>
    <property type="evidence" value="ECO:0007669"/>
    <property type="project" value="Ensembl"/>
</dbReference>
<dbReference type="GO" id="GO:0019899">
    <property type="term" value="F:enzyme binding"/>
    <property type="evidence" value="ECO:0007669"/>
    <property type="project" value="Ensembl"/>
</dbReference>
<dbReference type="GO" id="GO:0070273">
    <property type="term" value="F:phosphatidylinositol-4-phosphate binding"/>
    <property type="evidence" value="ECO:0000250"/>
    <property type="project" value="UniProtKB"/>
</dbReference>
<dbReference type="GO" id="GO:0090164">
    <property type="term" value="P:asymmetric Golgi ribbon formation"/>
    <property type="evidence" value="ECO:0007669"/>
    <property type="project" value="Ensembl"/>
</dbReference>
<dbReference type="GO" id="GO:0060352">
    <property type="term" value="P:cell adhesion molecule production"/>
    <property type="evidence" value="ECO:0000250"/>
    <property type="project" value="UniProtKB"/>
</dbReference>
<dbReference type="GO" id="GO:0016477">
    <property type="term" value="P:cell migration"/>
    <property type="evidence" value="ECO:0000250"/>
    <property type="project" value="UniProtKB"/>
</dbReference>
<dbReference type="GO" id="GO:0072752">
    <property type="term" value="P:cellular response to rapamycin"/>
    <property type="evidence" value="ECO:0000250"/>
    <property type="project" value="UniProtKB"/>
</dbReference>
<dbReference type="GO" id="GO:0010467">
    <property type="term" value="P:gene expression"/>
    <property type="evidence" value="ECO:0000250"/>
    <property type="project" value="UniProtKB"/>
</dbReference>
<dbReference type="GO" id="GO:0009101">
    <property type="term" value="P:glycoprotein biosynthetic process"/>
    <property type="evidence" value="ECO:0000250"/>
    <property type="project" value="UniProtKB"/>
</dbReference>
<dbReference type="GO" id="GO:0007030">
    <property type="term" value="P:Golgi organization"/>
    <property type="evidence" value="ECO:0000250"/>
    <property type="project" value="UniProtKB"/>
</dbReference>
<dbReference type="GO" id="GO:0043001">
    <property type="term" value="P:Golgi to plasma membrane protein transport"/>
    <property type="evidence" value="ECO:0000250"/>
    <property type="project" value="UniProtKB"/>
</dbReference>
<dbReference type="GO" id="GO:0048194">
    <property type="term" value="P:Golgi vesicle budding"/>
    <property type="evidence" value="ECO:0000250"/>
    <property type="project" value="UniProtKB"/>
</dbReference>
<dbReference type="GO" id="GO:0030032">
    <property type="term" value="P:lamellipodium assembly"/>
    <property type="evidence" value="ECO:0000250"/>
    <property type="project" value="UniProtKB"/>
</dbReference>
<dbReference type="GO" id="GO:0050901">
    <property type="term" value="P:leukocyte tethering or rolling"/>
    <property type="evidence" value="ECO:0000250"/>
    <property type="project" value="UniProtKB"/>
</dbReference>
<dbReference type="GO" id="GO:0043066">
    <property type="term" value="P:negative regulation of apoptotic process"/>
    <property type="evidence" value="ECO:0007669"/>
    <property type="project" value="Ensembl"/>
</dbReference>
<dbReference type="GO" id="GO:0050714">
    <property type="term" value="P:positive regulation of protein secretion"/>
    <property type="evidence" value="ECO:0000250"/>
    <property type="project" value="UniProtKB"/>
</dbReference>
<dbReference type="GO" id="GO:0032008">
    <property type="term" value="P:positive regulation of TOR signaling"/>
    <property type="evidence" value="ECO:0000250"/>
    <property type="project" value="UniProtKB"/>
</dbReference>
<dbReference type="GO" id="GO:0045053">
    <property type="term" value="P:protein retention in Golgi apparatus"/>
    <property type="evidence" value="ECO:0000250"/>
    <property type="project" value="UniProtKB"/>
</dbReference>
<dbReference type="GO" id="GO:0009306">
    <property type="term" value="P:protein secretion"/>
    <property type="evidence" value="ECO:0000250"/>
    <property type="project" value="UniProtKB"/>
</dbReference>
<dbReference type="GO" id="GO:0140450">
    <property type="term" value="P:protein targeting to Golgi apparatus"/>
    <property type="evidence" value="ECO:0007669"/>
    <property type="project" value="Ensembl"/>
</dbReference>
<dbReference type="GO" id="GO:0010821">
    <property type="term" value="P:regulation of mitochondrion organization"/>
    <property type="evidence" value="ECO:0000250"/>
    <property type="project" value="UniProtKB"/>
</dbReference>
<dbReference type="FunFam" id="1.10.3630.10:FF:000001">
    <property type="entry name" value="Golgi phosphoprotein 3"/>
    <property type="match status" value="1"/>
</dbReference>
<dbReference type="Gene3D" id="1.10.3630.10">
    <property type="entry name" value="yeast vps74-n-term truncation variant domain like"/>
    <property type="match status" value="1"/>
</dbReference>
<dbReference type="InterPro" id="IPR008628">
    <property type="entry name" value="GPP34-like"/>
</dbReference>
<dbReference type="InterPro" id="IPR038261">
    <property type="entry name" value="GPP34-like_sf"/>
</dbReference>
<dbReference type="PANTHER" id="PTHR12704:SF3">
    <property type="entry name" value="GOLGI PHOSPHOPROTEIN 3"/>
    <property type="match status" value="1"/>
</dbReference>
<dbReference type="PANTHER" id="PTHR12704">
    <property type="entry name" value="TRANS-GOLGI PROTEIN GMX33"/>
    <property type="match status" value="1"/>
</dbReference>
<dbReference type="Pfam" id="PF05719">
    <property type="entry name" value="GPP34"/>
    <property type="match status" value="1"/>
</dbReference>
<accession>Q9CRA5</accession>
<accession>A6BLP3</accession>
<accession>Q99KY1</accession>
<accession>Q9D636</accession>
<comment type="function">
    <text evidence="1">Phosphatidylinositol-4-phosphate-binding protein that links Golgi membranes to the cytoskeleton and may participate in the tensile force required for vesicle budding from the Golgi. Thereby, may play a role in Golgi membrane trafficking and could indirectly give its flattened shape to the Golgi apparatus. May also bind to the coatomer to regulate Golgi membrane trafficking. May play a role in anterograde transport from the Golgi to the plasma membrane and regulate secretion. Has also been involved in the control of the localization of Golgi enzymes through interaction with their cytoplasmic part. May play an indirect role in cell migration. Has also been involved in the modulation of mTOR signaling. May also be involved in the regulation of mitochondrial lipids biosynthesis (By similarity).</text>
</comment>
<comment type="subunit">
    <text evidence="1">Homodimer. Interacts with the coatomer complex. Interacts with MYO18A; the interaction is direct and may link Golgi membranes to the actin cytoskeleton. Interacts with GCNT1; may control its retention in the Golgi. Interacts with VPS35 (By similarity).</text>
</comment>
<comment type="subcellular location">
    <molecule>Isoform 2</molecule>
    <subcellularLocation>
        <location>Golgi apparatus</location>
    </subcellularLocation>
</comment>
<comment type="subcellular location">
    <subcellularLocation>
        <location evidence="3">Golgi apparatus</location>
        <location evidence="3">Golgi stack membrane</location>
        <topology evidence="3">Peripheral membrane protein</topology>
        <orientation evidence="3">Cytoplasmic side</orientation>
    </subcellularLocation>
    <subcellularLocation>
        <location evidence="3">Golgi apparatus</location>
        <location evidence="3">trans-Golgi network membrane</location>
        <topology evidence="3">Peripheral membrane protein</topology>
        <orientation evidence="3">Cytoplasmic side</orientation>
    </subcellularLocation>
    <subcellularLocation>
        <location evidence="3">Mitochondrion intermembrane space</location>
    </subcellularLocation>
    <subcellularLocation>
        <location evidence="1">Cell membrane</location>
    </subcellularLocation>
    <subcellularLocation>
        <location evidence="1">Endosome</location>
    </subcellularLocation>
    <text evidence="6">Phosphatidylinositol 4-phosphate-binding and oligomerization participate in the recruitment onto Golgi membranes.</text>
</comment>
<comment type="alternative products">
    <event type="alternative splicing"/>
    <isoform>
        <id>Q9CRA5-1</id>
        <name>1</name>
        <sequence type="displayed"/>
    </isoform>
    <isoform>
        <id>Q9CRA5-2</id>
        <name>2</name>
        <name>GMx33alphaV</name>
        <name>GPP34V</name>
        <sequence type="described" ref="VSP_037833 VSP_037834"/>
    </isoform>
</comment>
<comment type="tissue specificity">
    <text evidence="4">Expressed in all tissues tested including brain, heart, kidney, liver, lung, salivary gland, skeletal muscle, small intestine, spleen, stomach, skin and testis (at protein level).</text>
</comment>
<comment type="PTM">
    <text evidence="1">Phosphorylated.</text>
</comment>
<comment type="similarity">
    <text evidence="6">Belongs to the GOLPH3/VPS74 family.</text>
</comment>
<comment type="sequence caution" evidence="6">
    <conflict type="frameshift">
        <sequence resource="EMBL-CDS" id="BAB29486"/>
    </conflict>
</comment>
<keyword id="KW-0025">Alternative splicing</keyword>
<keyword id="KW-1003">Cell membrane</keyword>
<keyword id="KW-1015">Disulfide bond</keyword>
<keyword id="KW-0967">Endosome</keyword>
<keyword id="KW-0333">Golgi apparatus</keyword>
<keyword id="KW-0446">Lipid-binding</keyword>
<keyword id="KW-0472">Membrane</keyword>
<keyword id="KW-0496">Mitochondrion</keyword>
<keyword id="KW-0597">Phosphoprotein</keyword>
<keyword id="KW-0653">Protein transport</keyword>
<keyword id="KW-1185">Reference proteome</keyword>
<keyword id="KW-0813">Transport</keyword>
<sequence>MTSLTQRSSGLVQRRTEASRNAADKERAAGGGGGSGEDEAQSRRDEQDDDDKGDSKETRLTLMEEVLLLGLKDREGYTSFWNDCISSGLRGCMLIELALRGRLQLEACGMRRKSLLTRKVICKSDAPTGDVLLDEALKHVKETQPPETVQNWIELLSGETWNPLKLHYQLRNVRERLAKNLVEKGVLTTEKQNFLLFDMTTHPLTNNNIKQRLIKKVQEAVLDKWVNDPHRMDKRLLALIYLAHASDVLENAFAPLLDEQYDLATKRVRQLLDLDPEVECLKANTNEVLWAVVAAFTK</sequence>
<gene>
    <name type="primary">Golph3</name>
    <name type="synonym">Gpp34</name>
</gene>
<reference key="1">
    <citation type="journal article" date="2007" name="Gene">
        <title>Identification and characterization of a novel alternative splice variant of mouse GMx33alpha/GPP34.</title>
        <authorList>
            <person name="Nagano-Ito M."/>
            <person name="Yoshikawa S."/>
            <person name="Tamura M."/>
            <person name="Tsurumaki M."/>
            <person name="Ichikawa S."/>
        </authorList>
    </citation>
    <scope>NUCLEOTIDE SEQUENCE [MRNA] (ISOFORM 2)</scope>
    <scope>SUBCELLULAR LOCATION</scope>
</reference>
<reference key="2">
    <citation type="journal article" date="2005" name="Science">
        <title>The transcriptional landscape of the mammalian genome.</title>
        <authorList>
            <person name="Carninci P."/>
            <person name="Kasukawa T."/>
            <person name="Katayama S."/>
            <person name="Gough J."/>
            <person name="Frith M.C."/>
            <person name="Maeda N."/>
            <person name="Oyama R."/>
            <person name="Ravasi T."/>
            <person name="Lenhard B."/>
            <person name="Wells C."/>
            <person name="Kodzius R."/>
            <person name="Shimokawa K."/>
            <person name="Bajic V.B."/>
            <person name="Brenner S.E."/>
            <person name="Batalov S."/>
            <person name="Forrest A.R."/>
            <person name="Zavolan M."/>
            <person name="Davis M.J."/>
            <person name="Wilming L.G."/>
            <person name="Aidinis V."/>
            <person name="Allen J.E."/>
            <person name="Ambesi-Impiombato A."/>
            <person name="Apweiler R."/>
            <person name="Aturaliya R.N."/>
            <person name="Bailey T.L."/>
            <person name="Bansal M."/>
            <person name="Baxter L."/>
            <person name="Beisel K.W."/>
            <person name="Bersano T."/>
            <person name="Bono H."/>
            <person name="Chalk A.M."/>
            <person name="Chiu K.P."/>
            <person name="Choudhary V."/>
            <person name="Christoffels A."/>
            <person name="Clutterbuck D.R."/>
            <person name="Crowe M.L."/>
            <person name="Dalla E."/>
            <person name="Dalrymple B.P."/>
            <person name="de Bono B."/>
            <person name="Della Gatta G."/>
            <person name="di Bernardo D."/>
            <person name="Down T."/>
            <person name="Engstrom P."/>
            <person name="Fagiolini M."/>
            <person name="Faulkner G."/>
            <person name="Fletcher C.F."/>
            <person name="Fukushima T."/>
            <person name="Furuno M."/>
            <person name="Futaki S."/>
            <person name="Gariboldi M."/>
            <person name="Georgii-Hemming P."/>
            <person name="Gingeras T.R."/>
            <person name="Gojobori T."/>
            <person name="Green R.E."/>
            <person name="Gustincich S."/>
            <person name="Harbers M."/>
            <person name="Hayashi Y."/>
            <person name="Hensch T.K."/>
            <person name="Hirokawa N."/>
            <person name="Hill D."/>
            <person name="Huminiecki L."/>
            <person name="Iacono M."/>
            <person name="Ikeo K."/>
            <person name="Iwama A."/>
            <person name="Ishikawa T."/>
            <person name="Jakt M."/>
            <person name="Kanapin A."/>
            <person name="Katoh M."/>
            <person name="Kawasawa Y."/>
            <person name="Kelso J."/>
            <person name="Kitamura H."/>
            <person name="Kitano H."/>
            <person name="Kollias G."/>
            <person name="Krishnan S.P."/>
            <person name="Kruger A."/>
            <person name="Kummerfeld S.K."/>
            <person name="Kurochkin I.V."/>
            <person name="Lareau L.F."/>
            <person name="Lazarevic D."/>
            <person name="Lipovich L."/>
            <person name="Liu J."/>
            <person name="Liuni S."/>
            <person name="McWilliam S."/>
            <person name="Madan Babu M."/>
            <person name="Madera M."/>
            <person name="Marchionni L."/>
            <person name="Matsuda H."/>
            <person name="Matsuzawa S."/>
            <person name="Miki H."/>
            <person name="Mignone F."/>
            <person name="Miyake S."/>
            <person name="Morris K."/>
            <person name="Mottagui-Tabar S."/>
            <person name="Mulder N."/>
            <person name="Nakano N."/>
            <person name="Nakauchi H."/>
            <person name="Ng P."/>
            <person name="Nilsson R."/>
            <person name="Nishiguchi S."/>
            <person name="Nishikawa S."/>
            <person name="Nori F."/>
            <person name="Ohara O."/>
            <person name="Okazaki Y."/>
            <person name="Orlando V."/>
            <person name="Pang K.C."/>
            <person name="Pavan W.J."/>
            <person name="Pavesi G."/>
            <person name="Pesole G."/>
            <person name="Petrovsky N."/>
            <person name="Piazza S."/>
            <person name="Reed J."/>
            <person name="Reid J.F."/>
            <person name="Ring B.Z."/>
            <person name="Ringwald M."/>
            <person name="Rost B."/>
            <person name="Ruan Y."/>
            <person name="Salzberg S.L."/>
            <person name="Sandelin A."/>
            <person name="Schneider C."/>
            <person name="Schoenbach C."/>
            <person name="Sekiguchi K."/>
            <person name="Semple C.A."/>
            <person name="Seno S."/>
            <person name="Sessa L."/>
            <person name="Sheng Y."/>
            <person name="Shibata Y."/>
            <person name="Shimada H."/>
            <person name="Shimada K."/>
            <person name="Silva D."/>
            <person name="Sinclair B."/>
            <person name="Sperling S."/>
            <person name="Stupka E."/>
            <person name="Sugiura K."/>
            <person name="Sultana R."/>
            <person name="Takenaka Y."/>
            <person name="Taki K."/>
            <person name="Tammoja K."/>
            <person name="Tan S.L."/>
            <person name="Tang S."/>
            <person name="Taylor M.S."/>
            <person name="Tegner J."/>
            <person name="Teichmann S.A."/>
            <person name="Ueda H.R."/>
            <person name="van Nimwegen E."/>
            <person name="Verardo R."/>
            <person name="Wei C.L."/>
            <person name="Yagi K."/>
            <person name="Yamanishi H."/>
            <person name="Zabarovsky E."/>
            <person name="Zhu S."/>
            <person name="Zimmer A."/>
            <person name="Hide W."/>
            <person name="Bult C."/>
            <person name="Grimmond S.M."/>
            <person name="Teasdale R.D."/>
            <person name="Liu E.T."/>
            <person name="Brusic V."/>
            <person name="Quackenbush J."/>
            <person name="Wahlestedt C."/>
            <person name="Mattick J.S."/>
            <person name="Hume D.A."/>
            <person name="Kai C."/>
            <person name="Sasaki D."/>
            <person name="Tomaru Y."/>
            <person name="Fukuda S."/>
            <person name="Kanamori-Katayama M."/>
            <person name="Suzuki M."/>
            <person name="Aoki J."/>
            <person name="Arakawa T."/>
            <person name="Iida J."/>
            <person name="Imamura K."/>
            <person name="Itoh M."/>
            <person name="Kato T."/>
            <person name="Kawaji H."/>
            <person name="Kawagashira N."/>
            <person name="Kawashima T."/>
            <person name="Kojima M."/>
            <person name="Kondo S."/>
            <person name="Konno H."/>
            <person name="Nakano K."/>
            <person name="Ninomiya N."/>
            <person name="Nishio T."/>
            <person name="Okada M."/>
            <person name="Plessy C."/>
            <person name="Shibata K."/>
            <person name="Shiraki T."/>
            <person name="Suzuki S."/>
            <person name="Tagami M."/>
            <person name="Waki K."/>
            <person name="Watahiki A."/>
            <person name="Okamura-Oho Y."/>
            <person name="Suzuki H."/>
            <person name="Kawai J."/>
            <person name="Hayashizaki Y."/>
        </authorList>
    </citation>
    <scope>NUCLEOTIDE SEQUENCE [LARGE SCALE MRNA] (ISOFORM 1)</scope>
    <source>
        <strain>C57BL/6J</strain>
        <tissue>Skin</tissue>
        <tissue>Testis</tissue>
    </source>
</reference>
<reference key="3">
    <citation type="journal article" date="2004" name="Genome Res.">
        <title>The status, quality, and expansion of the NIH full-length cDNA project: the Mammalian Gene Collection (MGC).</title>
        <authorList>
            <consortium name="The MGC Project Team"/>
        </authorList>
    </citation>
    <scope>NUCLEOTIDE SEQUENCE [LARGE SCALE MRNA] (ISOFORM 1)</scope>
    <source>
        <strain>FVB/N-3</strain>
        <tissue>Mammary tumor</tissue>
    </source>
</reference>
<reference key="4">
    <citation type="journal article" date="2010" name="Cell">
        <title>A tissue-specific atlas of mouse protein phosphorylation and expression.</title>
        <authorList>
            <person name="Huttlin E.L."/>
            <person name="Jedrychowski M.P."/>
            <person name="Elias J.E."/>
            <person name="Goswami T."/>
            <person name="Rad R."/>
            <person name="Beausoleil S.A."/>
            <person name="Villen J."/>
            <person name="Haas W."/>
            <person name="Sowa M.E."/>
            <person name="Gygi S.P."/>
        </authorList>
    </citation>
    <scope>PHOSPHORYLATION [LARGE SCALE ANALYSIS] AT SER-35</scope>
    <scope>IDENTIFICATION BY MASS SPECTROMETRY [LARGE SCALE ANALYSIS]</scope>
    <source>
        <tissue>Kidney</tissue>
        <tissue>Liver</tissue>
        <tissue>Lung</tissue>
        <tissue>Pancreas</tissue>
        <tissue>Spleen</tissue>
        <tissue>Testis</tissue>
    </source>
</reference>
<reference key="5">
    <citation type="journal article" date="2013" name="Mol. Biol. Cell">
        <title>GOLPH3L antagonizes GOLPH3 to determine Golgi morphology.</title>
        <authorList>
            <person name="Ng M.M."/>
            <person name="Dippold H.C."/>
            <person name="Buschman M.D."/>
            <person name="Noakes C.J."/>
            <person name="Field S.J."/>
        </authorList>
    </citation>
    <scope>TISSUE SPECIFICITY</scope>
</reference>
<protein>
    <recommendedName>
        <fullName>Golgi phosphoprotein 3</fullName>
    </recommendedName>
    <alternativeName>
        <fullName>Coat protein GPP34</fullName>
    </alternativeName>
</protein>
<evidence type="ECO:0000250" key="1"/>
<evidence type="ECO:0000256" key="2">
    <source>
        <dbReference type="SAM" id="MobiDB-lite"/>
    </source>
</evidence>
<evidence type="ECO:0000269" key="3">
    <source>
    </source>
</evidence>
<evidence type="ECO:0000269" key="4">
    <source>
    </source>
</evidence>
<evidence type="ECO:0000303" key="5">
    <source>
    </source>
</evidence>
<evidence type="ECO:0000305" key="6"/>
<evidence type="ECO:0007744" key="7">
    <source>
    </source>
</evidence>
<organism>
    <name type="scientific">Mus musculus</name>
    <name type="common">Mouse</name>
    <dbReference type="NCBI Taxonomy" id="10090"/>
    <lineage>
        <taxon>Eukaryota</taxon>
        <taxon>Metazoa</taxon>
        <taxon>Chordata</taxon>
        <taxon>Craniata</taxon>
        <taxon>Vertebrata</taxon>
        <taxon>Euteleostomi</taxon>
        <taxon>Mammalia</taxon>
        <taxon>Eutheria</taxon>
        <taxon>Euarchontoglires</taxon>
        <taxon>Glires</taxon>
        <taxon>Rodentia</taxon>
        <taxon>Myomorpha</taxon>
        <taxon>Muroidea</taxon>
        <taxon>Muridae</taxon>
        <taxon>Murinae</taxon>
        <taxon>Mus</taxon>
        <taxon>Mus</taxon>
    </lineage>
</organism>
<name>GOLP3_MOUSE</name>
<proteinExistence type="evidence at protein level"/>
<feature type="chain" id="PRO_0000123820" description="Golgi phosphoprotein 3">
    <location>
        <begin position="1"/>
        <end position="298"/>
    </location>
</feature>
<feature type="region of interest" description="Disordered" evidence="2">
    <location>
        <begin position="1"/>
        <end position="57"/>
    </location>
</feature>
<feature type="region of interest" description="Beta-hairpin required for oligomerization" evidence="1">
    <location>
        <begin position="190"/>
        <end position="201"/>
    </location>
</feature>
<feature type="compositionally biased region" description="Polar residues" evidence="2">
    <location>
        <begin position="1"/>
        <end position="11"/>
    </location>
</feature>
<feature type="compositionally biased region" description="Basic and acidic residues" evidence="2">
    <location>
        <begin position="14"/>
        <end position="28"/>
    </location>
</feature>
<feature type="binding site" evidence="1">
    <location>
        <position position="81"/>
    </location>
    <ligand>
        <name>a 1,2-diacyl-sn-glycero-3-phospho-(1D-myo-inositol 4-phosphate)</name>
        <dbReference type="ChEBI" id="CHEBI:58178"/>
    </ligand>
</feature>
<feature type="binding site" evidence="1">
    <location>
        <position position="90"/>
    </location>
    <ligand>
        <name>a 1,2-diacyl-sn-glycero-3-phospho-(1D-myo-inositol 4-phosphate)</name>
        <dbReference type="ChEBI" id="CHEBI:58178"/>
    </ligand>
</feature>
<feature type="binding site" evidence="1">
    <location>
        <position position="171"/>
    </location>
    <ligand>
        <name>a 1,2-diacyl-sn-glycero-3-phospho-(1D-myo-inositol 4-phosphate)</name>
        <dbReference type="ChEBI" id="CHEBI:58178"/>
    </ligand>
</feature>
<feature type="binding site" evidence="1">
    <location>
        <position position="174"/>
    </location>
    <ligand>
        <name>a 1,2-diacyl-sn-glycero-3-phospho-(1D-myo-inositol 4-phosphate)</name>
        <dbReference type="ChEBI" id="CHEBI:58178"/>
    </ligand>
</feature>
<feature type="modified residue" description="Phosphoserine" evidence="7">
    <location>
        <position position="35"/>
    </location>
</feature>
<feature type="disulfide bond" evidence="1">
    <location>
        <begin position="84"/>
        <end position="108"/>
    </location>
</feature>
<feature type="splice variant" id="VSP_037833" description="In isoform 2." evidence="5">
    <original>GYTSFW</original>
    <variation>VRRGIH</variation>
    <location>
        <begin position="76"/>
        <end position="81"/>
    </location>
</feature>
<feature type="splice variant" id="VSP_037834" description="In isoform 2." evidence="5">
    <location>
        <begin position="82"/>
        <end position="298"/>
    </location>
</feature>